<evidence type="ECO:0000255" key="1">
    <source>
        <dbReference type="HAMAP-Rule" id="MF_00689"/>
    </source>
</evidence>
<comment type="function">
    <text evidence="1">Functions in the N-end rule pathway of protein degradation where it conjugates Leu from its aminoacyl-tRNA to the N-termini of proteins containing an N-terminal aspartate or glutamate.</text>
</comment>
<comment type="catalytic activity">
    <reaction evidence="1">
        <text>N-terminal L-glutamyl-[protein] + L-leucyl-tRNA(Leu) = N-terminal L-leucyl-L-glutamyl-[protein] + tRNA(Leu) + H(+)</text>
        <dbReference type="Rhea" id="RHEA:50412"/>
        <dbReference type="Rhea" id="RHEA-COMP:9613"/>
        <dbReference type="Rhea" id="RHEA-COMP:9622"/>
        <dbReference type="Rhea" id="RHEA-COMP:12664"/>
        <dbReference type="Rhea" id="RHEA-COMP:12668"/>
        <dbReference type="ChEBI" id="CHEBI:15378"/>
        <dbReference type="ChEBI" id="CHEBI:64721"/>
        <dbReference type="ChEBI" id="CHEBI:78442"/>
        <dbReference type="ChEBI" id="CHEBI:78494"/>
        <dbReference type="ChEBI" id="CHEBI:133041"/>
        <dbReference type="EC" id="2.3.2.29"/>
    </reaction>
</comment>
<comment type="catalytic activity">
    <reaction evidence="1">
        <text>N-terminal L-aspartyl-[protein] + L-leucyl-tRNA(Leu) = N-terminal L-leucyl-L-aspartyl-[protein] + tRNA(Leu) + H(+)</text>
        <dbReference type="Rhea" id="RHEA:50420"/>
        <dbReference type="Rhea" id="RHEA-COMP:9613"/>
        <dbReference type="Rhea" id="RHEA-COMP:9622"/>
        <dbReference type="Rhea" id="RHEA-COMP:12669"/>
        <dbReference type="Rhea" id="RHEA-COMP:12674"/>
        <dbReference type="ChEBI" id="CHEBI:15378"/>
        <dbReference type="ChEBI" id="CHEBI:64720"/>
        <dbReference type="ChEBI" id="CHEBI:78442"/>
        <dbReference type="ChEBI" id="CHEBI:78494"/>
        <dbReference type="ChEBI" id="CHEBI:133042"/>
        <dbReference type="EC" id="2.3.2.29"/>
    </reaction>
</comment>
<comment type="subcellular location">
    <subcellularLocation>
        <location evidence="1">Cytoplasm</location>
    </subcellularLocation>
</comment>
<comment type="similarity">
    <text evidence="1">Belongs to the R-transferase family. Bpt subfamily.</text>
</comment>
<keyword id="KW-0012">Acyltransferase</keyword>
<keyword id="KW-0963">Cytoplasm</keyword>
<keyword id="KW-0808">Transferase</keyword>
<accession>A0KW19</accession>
<feature type="chain" id="PRO_1000045151" description="Aspartate/glutamate leucyltransferase">
    <location>
        <begin position="1"/>
        <end position="238"/>
    </location>
</feature>
<sequence length="238" mass="27869">MNSNASNTPIAIGISQIFPCSYLDGQQEQLLVIQEETLDPILFDRLLAIGFRRSGSAIYKPRCPRCSACQPIRLPINEFMPSKRQKRTLAHNRDLTWRMTSEHTEAQYALYEKYIRERHFDGPMFPPSKSQYEQFLFCHWLPPTFIEVYDGNRLLAVAVTDTLPNSLSAIYSYFDPDEERRSLGSLLILLQCRLAKLQDKEFLYLGYQIDANRKMSYKRLYRPYQILTPQGWEYSQVC</sequence>
<organism>
    <name type="scientific">Shewanella sp. (strain ANA-3)</name>
    <dbReference type="NCBI Taxonomy" id="94122"/>
    <lineage>
        <taxon>Bacteria</taxon>
        <taxon>Pseudomonadati</taxon>
        <taxon>Pseudomonadota</taxon>
        <taxon>Gammaproteobacteria</taxon>
        <taxon>Alteromonadales</taxon>
        <taxon>Shewanellaceae</taxon>
        <taxon>Shewanella</taxon>
    </lineage>
</organism>
<gene>
    <name evidence="1" type="primary">bpt</name>
    <name type="ordered locus">Shewana3_1755</name>
</gene>
<dbReference type="EC" id="2.3.2.29" evidence="1"/>
<dbReference type="EMBL" id="CP000469">
    <property type="protein sequence ID" value="ABK47988.1"/>
    <property type="molecule type" value="Genomic_DNA"/>
</dbReference>
<dbReference type="RefSeq" id="WP_011716771.1">
    <property type="nucleotide sequence ID" value="NC_008577.1"/>
</dbReference>
<dbReference type="SMR" id="A0KW19"/>
<dbReference type="STRING" id="94122.Shewana3_1755"/>
<dbReference type="KEGG" id="shn:Shewana3_1755"/>
<dbReference type="eggNOG" id="COG2935">
    <property type="taxonomic scope" value="Bacteria"/>
</dbReference>
<dbReference type="HOGENOM" id="CLU_077607_0_0_6"/>
<dbReference type="OrthoDB" id="9782022at2"/>
<dbReference type="Proteomes" id="UP000002589">
    <property type="component" value="Chromosome"/>
</dbReference>
<dbReference type="GO" id="GO:0005737">
    <property type="term" value="C:cytoplasm"/>
    <property type="evidence" value="ECO:0007669"/>
    <property type="project" value="UniProtKB-SubCell"/>
</dbReference>
<dbReference type="GO" id="GO:0004057">
    <property type="term" value="F:arginyl-tRNA--protein transferase activity"/>
    <property type="evidence" value="ECO:0007669"/>
    <property type="project" value="InterPro"/>
</dbReference>
<dbReference type="GO" id="GO:0008914">
    <property type="term" value="F:leucyl-tRNA--protein transferase activity"/>
    <property type="evidence" value="ECO:0007669"/>
    <property type="project" value="UniProtKB-UniRule"/>
</dbReference>
<dbReference type="GO" id="GO:0071596">
    <property type="term" value="P:ubiquitin-dependent protein catabolic process via the N-end rule pathway"/>
    <property type="evidence" value="ECO:0007669"/>
    <property type="project" value="InterPro"/>
</dbReference>
<dbReference type="HAMAP" id="MF_00689">
    <property type="entry name" value="Bpt"/>
    <property type="match status" value="1"/>
</dbReference>
<dbReference type="InterPro" id="IPR016181">
    <property type="entry name" value="Acyl_CoA_acyltransferase"/>
</dbReference>
<dbReference type="InterPro" id="IPR017138">
    <property type="entry name" value="Asp_Glu_LeuTrfase"/>
</dbReference>
<dbReference type="InterPro" id="IPR030700">
    <property type="entry name" value="N-end_Aminoacyl_Trfase"/>
</dbReference>
<dbReference type="InterPro" id="IPR007472">
    <property type="entry name" value="N-end_Aminoacyl_Trfase_C"/>
</dbReference>
<dbReference type="InterPro" id="IPR007471">
    <property type="entry name" value="N-end_Aminoacyl_Trfase_N"/>
</dbReference>
<dbReference type="NCBIfam" id="NF002342">
    <property type="entry name" value="PRK01305.1-3"/>
    <property type="match status" value="1"/>
</dbReference>
<dbReference type="NCBIfam" id="NF002345">
    <property type="entry name" value="PRK01305.2-2"/>
    <property type="match status" value="1"/>
</dbReference>
<dbReference type="NCBIfam" id="NF002346">
    <property type="entry name" value="PRK01305.2-3"/>
    <property type="match status" value="1"/>
</dbReference>
<dbReference type="NCBIfam" id="NF002347">
    <property type="entry name" value="PRK01305.2-4"/>
    <property type="match status" value="1"/>
</dbReference>
<dbReference type="PANTHER" id="PTHR21367">
    <property type="entry name" value="ARGININE-TRNA-PROTEIN TRANSFERASE 1"/>
    <property type="match status" value="1"/>
</dbReference>
<dbReference type="PANTHER" id="PTHR21367:SF1">
    <property type="entry name" value="ARGINYL-TRNA--PROTEIN TRANSFERASE 1"/>
    <property type="match status" value="1"/>
</dbReference>
<dbReference type="Pfam" id="PF04377">
    <property type="entry name" value="ATE_C"/>
    <property type="match status" value="1"/>
</dbReference>
<dbReference type="Pfam" id="PF04376">
    <property type="entry name" value="ATE_N"/>
    <property type="match status" value="1"/>
</dbReference>
<dbReference type="PIRSF" id="PIRSF037208">
    <property type="entry name" value="ATE_pro_prd"/>
    <property type="match status" value="1"/>
</dbReference>
<dbReference type="SUPFAM" id="SSF55729">
    <property type="entry name" value="Acyl-CoA N-acyltransferases (Nat)"/>
    <property type="match status" value="1"/>
</dbReference>
<reference key="1">
    <citation type="submission" date="2006-09" db="EMBL/GenBank/DDBJ databases">
        <title>Complete sequence of chromosome 1 of Shewanella sp. ANA-3.</title>
        <authorList>
            <person name="Copeland A."/>
            <person name="Lucas S."/>
            <person name="Lapidus A."/>
            <person name="Barry K."/>
            <person name="Detter J.C."/>
            <person name="Glavina del Rio T."/>
            <person name="Hammon N."/>
            <person name="Israni S."/>
            <person name="Dalin E."/>
            <person name="Tice H."/>
            <person name="Pitluck S."/>
            <person name="Chertkov O."/>
            <person name="Brettin T."/>
            <person name="Bruce D."/>
            <person name="Han C."/>
            <person name="Tapia R."/>
            <person name="Gilna P."/>
            <person name="Schmutz J."/>
            <person name="Larimer F."/>
            <person name="Land M."/>
            <person name="Hauser L."/>
            <person name="Kyrpides N."/>
            <person name="Kim E."/>
            <person name="Newman D."/>
            <person name="Salticov C."/>
            <person name="Konstantinidis K."/>
            <person name="Klappenback J."/>
            <person name="Tiedje J."/>
            <person name="Richardson P."/>
        </authorList>
    </citation>
    <scope>NUCLEOTIDE SEQUENCE [LARGE SCALE GENOMIC DNA]</scope>
    <source>
        <strain>ANA-3</strain>
    </source>
</reference>
<name>BPT_SHESA</name>
<proteinExistence type="inferred from homology"/>
<protein>
    <recommendedName>
        <fullName evidence="1">Aspartate/glutamate leucyltransferase</fullName>
        <ecNumber evidence="1">2.3.2.29</ecNumber>
    </recommendedName>
</protein>